<dbReference type="EMBL" id="X16093">
    <property type="protein sequence ID" value="CAA34221.1"/>
    <property type="molecule type" value="Genomic_DNA"/>
</dbReference>
<dbReference type="PIR" id="S06539">
    <property type="entry name" value="VNBPHK"/>
</dbReference>
<dbReference type="PDB" id="1HJI">
    <property type="method" value="NMR"/>
    <property type="chains" value="B=22-47"/>
</dbReference>
<dbReference type="PDB" id="6ALG">
    <property type="method" value="EM"/>
    <property type="resolution" value="3.70 A"/>
    <property type="chains" value="N=4-112"/>
</dbReference>
<dbReference type="PDBsum" id="1HJI"/>
<dbReference type="PDBsum" id="6ALG"/>
<dbReference type="SMR" id="P18683"/>
<dbReference type="EvolutionaryTrace" id="P18683"/>
<dbReference type="GO" id="GO:0006353">
    <property type="term" value="P:DNA-templated transcription termination"/>
    <property type="evidence" value="ECO:0000314"/>
    <property type="project" value="CACAO"/>
</dbReference>
<dbReference type="GO" id="GO:0032785">
    <property type="term" value="P:negative regulation of DNA-templated transcription, elongation"/>
    <property type="evidence" value="ECO:0000314"/>
    <property type="project" value="CACAO"/>
</dbReference>
<evidence type="ECO:0007829" key="1">
    <source>
        <dbReference type="PDB" id="1HJI"/>
    </source>
</evidence>
<name>VNUN_BPHK0</name>
<sequence>MLMVKKTIYVNPDSGQNRKVSDRGLTSRDRRRIARWEKRIAYALKNGVTPGFNAIDDGPEYKINEDPMDKVDKALATPFPRDVEKIEDEKYEDVMHRVVNHAHQRNPNKKWS</sequence>
<feature type="chain" id="PRO_0000077786" description="Transcription termination factor nun">
    <location>
        <begin position="1"/>
        <end position="112"/>
    </location>
</feature>
<feature type="helix" evidence="1">
    <location>
        <begin position="27"/>
        <end position="45"/>
    </location>
</feature>
<proteinExistence type="evidence at protein level"/>
<gene>
    <name type="primary">nun</name>
</gene>
<keyword id="KW-0002">3D-structure</keyword>
<keyword id="KW-0804">Transcription</keyword>
<keyword id="KW-0805">Transcription regulation</keyword>
<keyword id="KW-0806">Transcription termination</keyword>
<accession>P18683</accession>
<organism>
    <name type="scientific">Escherichia phage HK022</name>
    <name type="common">Bacteriophage HK022</name>
    <dbReference type="NCBI Taxonomy" id="10742"/>
    <lineage>
        <taxon>Viruses</taxon>
        <taxon>Duplodnaviria</taxon>
        <taxon>Heunggongvirae</taxon>
        <taxon>Uroviricota</taxon>
        <taxon>Caudoviricetes</taxon>
        <taxon>Hendrixvirinae</taxon>
        <taxon>Shamshuipovirus</taxon>
    </lineage>
</organism>
<organismHost>
    <name type="scientific">Escherichia coli</name>
    <dbReference type="NCBI Taxonomy" id="562"/>
</organismHost>
<reference key="1">
    <citation type="journal article" date="1989" name="J. Mol. Biol.">
        <title>Structure and function of the nun gene and the immunity region of the lambdoid phage HK022.</title>
        <authorList>
            <person name="Oberto J."/>
            <person name="Weisberg R.A."/>
            <person name="Gottesman M.E."/>
        </authorList>
    </citation>
    <scope>NUCLEOTIDE SEQUENCE [GENOMIC DNA]</scope>
</reference>
<protein>
    <recommendedName>
        <fullName>Transcription termination factor nun</fullName>
    </recommendedName>
</protein>